<dbReference type="EMBL" id="CM000157">
    <property type="protein sequence ID" value="EDW88415.1"/>
    <property type="status" value="ALT_INIT"/>
    <property type="molecule type" value="Genomic_DNA"/>
</dbReference>
<dbReference type="SMR" id="B4NW98"/>
<dbReference type="EnsemblMetazoa" id="FBtr0265232">
    <property type="protein sequence ID" value="FBpp0263724"/>
    <property type="gene ID" value="FBgn0068012"/>
</dbReference>
<dbReference type="EnsemblMetazoa" id="XM_002088667.3">
    <property type="protein sequence ID" value="XP_002088703.2"/>
    <property type="gene ID" value="LOC6527615"/>
</dbReference>
<dbReference type="GeneID" id="6527615"/>
<dbReference type="KEGG" id="dya:Dyak_GE18714"/>
<dbReference type="CTD" id="8668"/>
<dbReference type="eggNOG" id="KOG0643">
    <property type="taxonomic scope" value="Eukaryota"/>
</dbReference>
<dbReference type="OrthoDB" id="24966at2759"/>
<dbReference type="ChiTaRS" id="Trip1">
    <property type="organism name" value="fly"/>
</dbReference>
<dbReference type="Proteomes" id="UP000002282">
    <property type="component" value="Chromosome 2L"/>
</dbReference>
<dbReference type="GO" id="GO:0016282">
    <property type="term" value="C:eukaryotic 43S preinitiation complex"/>
    <property type="evidence" value="ECO:0007669"/>
    <property type="project" value="UniProtKB-UniRule"/>
</dbReference>
<dbReference type="GO" id="GO:0033290">
    <property type="term" value="C:eukaryotic 48S preinitiation complex"/>
    <property type="evidence" value="ECO:0007669"/>
    <property type="project" value="UniProtKB-UniRule"/>
</dbReference>
<dbReference type="GO" id="GO:0071541">
    <property type="term" value="C:eukaryotic translation initiation factor 3 complex, eIF3m"/>
    <property type="evidence" value="ECO:0007669"/>
    <property type="project" value="TreeGrafter"/>
</dbReference>
<dbReference type="GO" id="GO:0003723">
    <property type="term" value="F:RNA binding"/>
    <property type="evidence" value="ECO:0007669"/>
    <property type="project" value="TreeGrafter"/>
</dbReference>
<dbReference type="GO" id="GO:0003743">
    <property type="term" value="F:translation initiation factor activity"/>
    <property type="evidence" value="ECO:0007669"/>
    <property type="project" value="UniProtKB-UniRule"/>
</dbReference>
<dbReference type="GO" id="GO:0001732">
    <property type="term" value="P:formation of cytoplasmic translation initiation complex"/>
    <property type="evidence" value="ECO:0007669"/>
    <property type="project" value="UniProtKB-UniRule"/>
</dbReference>
<dbReference type="FunFam" id="2.130.10.10:FF:000127">
    <property type="entry name" value="Eukaryotic translation initiation factor 3 subunit I"/>
    <property type="match status" value="1"/>
</dbReference>
<dbReference type="Gene3D" id="2.130.10.10">
    <property type="entry name" value="YVTN repeat-like/Quinoprotein amine dehydrogenase"/>
    <property type="match status" value="1"/>
</dbReference>
<dbReference type="HAMAP" id="MF_03008">
    <property type="entry name" value="eIF3i"/>
    <property type="match status" value="1"/>
</dbReference>
<dbReference type="InterPro" id="IPR027525">
    <property type="entry name" value="eIF3i"/>
</dbReference>
<dbReference type="InterPro" id="IPR015943">
    <property type="entry name" value="WD40/YVTN_repeat-like_dom_sf"/>
</dbReference>
<dbReference type="InterPro" id="IPR019775">
    <property type="entry name" value="WD40_repeat_CS"/>
</dbReference>
<dbReference type="InterPro" id="IPR036322">
    <property type="entry name" value="WD40_repeat_dom_sf"/>
</dbReference>
<dbReference type="InterPro" id="IPR001680">
    <property type="entry name" value="WD40_rpt"/>
</dbReference>
<dbReference type="PANTHER" id="PTHR19877">
    <property type="entry name" value="EUKARYOTIC TRANSLATION INITIATION FACTOR 3 SUBUNIT I"/>
    <property type="match status" value="1"/>
</dbReference>
<dbReference type="PANTHER" id="PTHR19877:SF1">
    <property type="entry name" value="EUKARYOTIC TRANSLATION INITIATION FACTOR 3 SUBUNIT I"/>
    <property type="match status" value="1"/>
</dbReference>
<dbReference type="Pfam" id="PF24805">
    <property type="entry name" value="EIF3I"/>
    <property type="match status" value="1"/>
</dbReference>
<dbReference type="SMART" id="SM00320">
    <property type="entry name" value="WD40"/>
    <property type="match status" value="6"/>
</dbReference>
<dbReference type="SUPFAM" id="SSF50978">
    <property type="entry name" value="WD40 repeat-like"/>
    <property type="match status" value="1"/>
</dbReference>
<dbReference type="PROSITE" id="PS00678">
    <property type="entry name" value="WD_REPEATS_1"/>
    <property type="match status" value="2"/>
</dbReference>
<dbReference type="PROSITE" id="PS50082">
    <property type="entry name" value="WD_REPEATS_2"/>
    <property type="match status" value="5"/>
</dbReference>
<dbReference type="PROSITE" id="PS50294">
    <property type="entry name" value="WD_REPEATS_REGION"/>
    <property type="match status" value="2"/>
</dbReference>
<comment type="function">
    <text evidence="1">Component of the eukaryotic translation initiation factor 3 (eIF-3) complex, which is involved in protein synthesis of a specialized repertoire of mRNAs and, together with other initiation factors, stimulates binding of mRNA and methionyl-tRNAi to the 40S ribosome. The eIF-3 complex specifically targets and initiates translation of a subset of mRNAs involved in cell proliferation.</text>
</comment>
<comment type="subunit">
    <text evidence="1">Component of the eukaryotic translation initiation factor 3 (eIF-3) complex. The eIF-3 complex interacts with pix.</text>
</comment>
<comment type="subcellular location">
    <subcellularLocation>
        <location evidence="1">Cytoplasm</location>
    </subcellularLocation>
</comment>
<comment type="similarity">
    <text evidence="1">Belongs to the eIF-3 subunit I family.</text>
</comment>
<comment type="sequence caution" evidence="2">
    <conflict type="erroneous initiation">
        <sequence resource="EMBL-CDS" id="EDW88415"/>
    </conflict>
</comment>
<evidence type="ECO:0000255" key="1">
    <source>
        <dbReference type="HAMAP-Rule" id="MF_03008"/>
    </source>
</evidence>
<evidence type="ECO:0000305" key="2"/>
<accession>B4NW98</accession>
<keyword id="KW-0963">Cytoplasm</keyword>
<keyword id="KW-0396">Initiation factor</keyword>
<keyword id="KW-0648">Protein biosynthesis</keyword>
<keyword id="KW-0677">Repeat</keyword>
<keyword id="KW-0853">WD repeat</keyword>
<protein>
    <recommendedName>
        <fullName evidence="1">Eukaryotic translation initiation factor 3 subunit I</fullName>
        <shortName evidence="1">eIF3i</shortName>
    </recommendedName>
    <alternativeName>
        <fullName evidence="1">Eukaryotic translation initiation factor 3 subunit 2</fullName>
    </alternativeName>
    <alternativeName>
        <fullName>TRIP-1 homolog</fullName>
    </alternativeName>
</protein>
<feature type="chain" id="PRO_0000365352" description="Eukaryotic translation initiation factor 3 subunit I">
    <location>
        <begin position="1"/>
        <end position="322"/>
    </location>
</feature>
<feature type="repeat" description="WD 1">
    <location>
        <begin position="4"/>
        <end position="43"/>
    </location>
</feature>
<feature type="repeat" description="WD 2">
    <location>
        <begin position="46"/>
        <end position="85"/>
    </location>
</feature>
<feature type="repeat" description="WD 3">
    <location>
        <begin position="141"/>
        <end position="180"/>
    </location>
</feature>
<feature type="repeat" description="WD 4">
    <location>
        <begin position="184"/>
        <end position="223"/>
    </location>
</feature>
<feature type="repeat" description="WD 5">
    <location>
        <begin position="281"/>
        <end position="322"/>
    </location>
</feature>
<name>EIF3I_DROYA</name>
<gene>
    <name evidence="1" type="primary">eIF3i</name>
    <name evidence="1" type="synonym">eif3-S2</name>
    <name evidence="1" type="synonym">Trip1</name>
    <name type="ORF">GE18714</name>
</gene>
<organism>
    <name type="scientific">Drosophila yakuba</name>
    <name type="common">Fruit fly</name>
    <dbReference type="NCBI Taxonomy" id="7245"/>
    <lineage>
        <taxon>Eukaryota</taxon>
        <taxon>Metazoa</taxon>
        <taxon>Ecdysozoa</taxon>
        <taxon>Arthropoda</taxon>
        <taxon>Hexapoda</taxon>
        <taxon>Insecta</taxon>
        <taxon>Pterygota</taxon>
        <taxon>Neoptera</taxon>
        <taxon>Endopterygota</taxon>
        <taxon>Diptera</taxon>
        <taxon>Brachycera</taxon>
        <taxon>Muscomorpha</taxon>
        <taxon>Ephydroidea</taxon>
        <taxon>Drosophilidae</taxon>
        <taxon>Drosophila</taxon>
        <taxon>Sophophora</taxon>
    </lineage>
</organism>
<reference key="1">
    <citation type="journal article" date="2007" name="Nature">
        <title>Evolution of genes and genomes on the Drosophila phylogeny.</title>
        <authorList>
            <consortium name="Drosophila 12 genomes consortium"/>
        </authorList>
    </citation>
    <scope>NUCLEOTIDE SEQUENCE [LARGE SCALE GENOMIC DNA]</scope>
    <source>
        <strain>Tai18E2 / Tucson 14021-0261.01</strain>
    </source>
</reference>
<sequence length="322" mass="35660">MLQGHERSITQIKYNREGDLLFSCSKDQKPNVWYSLNGERLGTYDGHQGAVWCLDVDWESRKLITGAGDMTTKIWDVEYGTVIASIPTKSSVRTSNFSFSGNQAAYSTDKAMGQSCELFLIDVRNADSSLSEQEPTLRIPMTESKITSMLWGPLDETIITGHDNGNIAIWDIRKGQKVVDSGTDHSAGINDMQLSKDGTMFVTASKDTTAKLFDSESLMCLKSYKTERPVNSAAISPILDHVVLGGGQDAMEVTTTSTKAGKFDSRFFHLIYEEEFARLKGHFGPINSLAFHPDGKSYASGGEDGFVRVQTFDSTYFENIFE</sequence>
<proteinExistence type="inferred from homology"/>